<gene>
    <name type="primary">PEX20</name>
    <name evidence="9" type="ORF">YALI0_E06831g</name>
</gene>
<feature type="chain" id="PRO_0000456995" description="Peroxisome biogenesis protein 20">
    <location>
        <begin position="1"/>
        <end position="417"/>
    </location>
</feature>
<feature type="region of interest" description="Disordered" evidence="3">
    <location>
        <begin position="1"/>
        <end position="47"/>
    </location>
</feature>
<feature type="region of interest" description="Disordered" evidence="3">
    <location>
        <begin position="65"/>
        <end position="101"/>
    </location>
</feature>
<feature type="region of interest" description="Disordered" evidence="3">
    <location>
        <begin position="321"/>
        <end position="361"/>
    </location>
</feature>
<feature type="short sequence motif" description="WxxxF/Y motif 1" evidence="8">
    <location>
        <begin position="103"/>
        <end position="107"/>
    </location>
</feature>
<feature type="short sequence motif" description="WxxxF/Y motif 2" evidence="8">
    <location>
        <begin position="126"/>
        <end position="130"/>
    </location>
</feature>
<feature type="short sequence motif" description="WxxxF/Y motif 2" evidence="8">
    <location>
        <begin position="411"/>
        <end position="415"/>
    </location>
</feature>
<feature type="compositionally biased region" description="Polar residues" evidence="3">
    <location>
        <begin position="1"/>
        <end position="15"/>
    </location>
</feature>
<feature type="compositionally biased region" description="Basic and acidic residues" evidence="3">
    <location>
        <begin position="17"/>
        <end position="28"/>
    </location>
</feature>
<feature type="compositionally biased region" description="Polar residues" evidence="3">
    <location>
        <begin position="37"/>
        <end position="47"/>
    </location>
</feature>
<feature type="compositionally biased region" description="Low complexity" evidence="3">
    <location>
        <begin position="71"/>
        <end position="92"/>
    </location>
</feature>
<feature type="compositionally biased region" description="Polar residues" evidence="3">
    <location>
        <begin position="323"/>
        <end position="336"/>
    </location>
</feature>
<feature type="compositionally biased region" description="Basic and acidic residues" evidence="3">
    <location>
        <begin position="340"/>
        <end position="361"/>
    </location>
</feature>
<feature type="cross-link" description="Glycyl cysteine thioester (Cys-Gly) (interchain with G-Cter in ubiquitin)" evidence="5">
    <location>
        <position position="4"/>
    </location>
</feature>
<feature type="cross-link" description="Glycyl lysine isopeptide (Lys-Gly) (interchain with G-Cter in ubiquitin)" evidence="5">
    <location>
        <position position="15"/>
    </location>
</feature>
<feature type="mutagenesis site" description="Slight mislocalization of the non-PTS1/non-PTS2 acyl-CoA oxidases (Aox) izozymes. Does not afect import of PTS1-containing proteins." evidence="5">
    <original>W</original>
    <variation>G</variation>
    <location>
        <position position="103"/>
    </location>
</feature>
<feature type="mutagenesis site" description="Slight mislocalization of the non-PTS1/non-PTS2 acyl-CoA oxidases (Aox) izozymes. Does not afect import of PTS1-containing proteins." evidence="5">
    <original>W</original>
    <variation>G</variation>
    <location>
        <position position="126"/>
    </location>
</feature>
<feature type="mutagenesis site" description="Abolished interaction with PEX7; impaired ability to mediate peroxisomal import of PTS2-containing protein 3-oxoacyl-CoA thiolase. Does not affect peroxisomal import of non-PTS1/non-PTS2 acyl-CoA oxidases (Aox) izozymes." evidence="4 5">
    <original>S</original>
    <variation>F</variation>
    <location>
        <position position="280"/>
    </location>
</feature>
<feature type="mutagenesis site" description="Mislocalization of the non-PTS1/non-PTS2 acyl-CoA oxidases (Aox) izozymes. Does not afect import of PTS1-containing proteins." evidence="5">
    <original>W</original>
    <variation>G</variation>
    <location>
        <position position="411"/>
    </location>
</feature>
<feature type="sequence conflict" description="In Ref. 1; AAC23564." evidence="7" ref="1">
    <original>QDFMRQ</original>
    <variation>EDFMGE</variation>
    <location>
        <begin position="128"/>
        <end position="133"/>
    </location>
</feature>
<feature type="sequence conflict" description="In Ref. 1; AAC23564." evidence="7" ref="1">
    <original>V</original>
    <variation>G</variation>
    <location>
        <position position="140"/>
    </location>
</feature>
<feature type="sequence conflict" description="In Ref. 1; AAC23564." evidence="7" ref="1">
    <original>A</original>
    <variation>P</variation>
    <location>
        <position position="193"/>
    </location>
</feature>
<organism>
    <name type="scientific">Yarrowia lipolytica (strain CLIB 122 / E 150)</name>
    <name type="common">Yeast</name>
    <name type="synonym">Candida lipolytica</name>
    <dbReference type="NCBI Taxonomy" id="284591"/>
    <lineage>
        <taxon>Eukaryota</taxon>
        <taxon>Fungi</taxon>
        <taxon>Dikarya</taxon>
        <taxon>Ascomycota</taxon>
        <taxon>Saccharomycotina</taxon>
        <taxon>Dipodascomycetes</taxon>
        <taxon>Dipodascales</taxon>
        <taxon>Dipodascales incertae sedis</taxon>
        <taxon>Yarrowia</taxon>
    </lineage>
</organism>
<dbReference type="EMBL" id="AF054613">
    <property type="protein sequence ID" value="AAC23564.2"/>
    <property type="molecule type" value="Genomic_DNA"/>
</dbReference>
<dbReference type="EMBL" id="CR382131">
    <property type="protein sequence ID" value="CAG79226.1"/>
    <property type="molecule type" value="Genomic_DNA"/>
</dbReference>
<dbReference type="RefSeq" id="XP_503644.1">
    <property type="nucleotide sequence ID" value="XM_503644.1"/>
</dbReference>
<dbReference type="SMR" id="Q6C6R8"/>
<dbReference type="STRING" id="284591.Q6C6R8"/>
<dbReference type="iPTMnet" id="Q6C6R8"/>
<dbReference type="EnsemblFungi" id="CAG79226">
    <property type="protein sequence ID" value="CAG79226"/>
    <property type="gene ID" value="YALI0_E06831g"/>
</dbReference>
<dbReference type="KEGG" id="yli:2912001"/>
<dbReference type="VEuPathDB" id="FungiDB:YALI0_E06831g"/>
<dbReference type="VEuPathDB" id="FungiDB:YALI1_E08198g"/>
<dbReference type="HOGENOM" id="CLU_665674_0_0_1"/>
<dbReference type="InParanoid" id="Q6C6R8"/>
<dbReference type="OMA" id="DHHWDEM"/>
<dbReference type="OrthoDB" id="117876at4891"/>
<dbReference type="Proteomes" id="UP000001300">
    <property type="component" value="Chromosome E"/>
</dbReference>
<dbReference type="GO" id="GO:0005829">
    <property type="term" value="C:cytosol"/>
    <property type="evidence" value="ECO:0000314"/>
    <property type="project" value="UniProtKB"/>
</dbReference>
<dbReference type="GO" id="GO:0005782">
    <property type="term" value="C:peroxisomal matrix"/>
    <property type="evidence" value="ECO:0007669"/>
    <property type="project" value="UniProtKB-SubCell"/>
</dbReference>
<dbReference type="GO" id="GO:0005778">
    <property type="term" value="C:peroxisomal membrane"/>
    <property type="evidence" value="ECO:0000314"/>
    <property type="project" value="UniProtKB"/>
</dbReference>
<dbReference type="GO" id="GO:0005052">
    <property type="term" value="F:peroxisome matrix targeting signal-1 binding"/>
    <property type="evidence" value="ECO:0000318"/>
    <property type="project" value="GO_Central"/>
</dbReference>
<dbReference type="GO" id="GO:0005053">
    <property type="term" value="F:peroxisome matrix targeting signal-2 binding"/>
    <property type="evidence" value="ECO:0000314"/>
    <property type="project" value="UniProtKB"/>
</dbReference>
<dbReference type="GO" id="GO:0140597">
    <property type="term" value="F:protein carrier chaperone"/>
    <property type="evidence" value="ECO:0000314"/>
    <property type="project" value="UniProtKB"/>
</dbReference>
<dbReference type="GO" id="GO:0016558">
    <property type="term" value="P:protein import into peroxisome matrix"/>
    <property type="evidence" value="ECO:0000314"/>
    <property type="project" value="UniProtKB"/>
</dbReference>
<dbReference type="GO" id="GO:0016560">
    <property type="term" value="P:protein import into peroxisome matrix, docking"/>
    <property type="evidence" value="ECO:0000318"/>
    <property type="project" value="GO_Central"/>
</dbReference>
<dbReference type="Gene3D" id="6.10.280.230">
    <property type="match status" value="1"/>
</dbReference>
<evidence type="ECO:0000250" key="1">
    <source>
        <dbReference type="UniProtKB" id="P50542"/>
    </source>
</evidence>
<evidence type="ECO:0000250" key="2">
    <source>
        <dbReference type="UniProtKB" id="Q2VUH8"/>
    </source>
</evidence>
<evidence type="ECO:0000256" key="3">
    <source>
        <dbReference type="SAM" id="MobiDB-lite"/>
    </source>
</evidence>
<evidence type="ECO:0000269" key="4">
    <source>
    </source>
</evidence>
<evidence type="ECO:0000269" key="5">
    <source>
    </source>
</evidence>
<evidence type="ECO:0000269" key="6">
    <source>
    </source>
</evidence>
<evidence type="ECO:0000305" key="7"/>
<evidence type="ECO:0000305" key="8">
    <source>
    </source>
</evidence>
<evidence type="ECO:0000312" key="9">
    <source>
        <dbReference type="EMBL" id="CAG79226.1"/>
    </source>
</evidence>
<protein>
    <recommendedName>
        <fullName evidence="7">Peroxisome biogenesis protein 20</fullName>
    </recommendedName>
    <alternativeName>
        <fullName evidence="7">Peroxin-20</fullName>
    </alternativeName>
</protein>
<accession>Q6C6R8</accession>
<accession>O74211</accession>
<keyword id="KW-0963">Cytoplasm</keyword>
<keyword id="KW-1017">Isopeptide bond</keyword>
<keyword id="KW-0576">Peroxisome</keyword>
<keyword id="KW-0653">Protein transport</keyword>
<keyword id="KW-1185">Reference proteome</keyword>
<keyword id="KW-0677">Repeat</keyword>
<keyword id="KW-0882">Thioester bond</keyword>
<keyword id="KW-0811">Translocation</keyword>
<keyword id="KW-0813">Transport</keyword>
<keyword id="KW-0832">Ubl conjugation</keyword>
<proteinExistence type="evidence at protein level"/>
<comment type="function">
    <text evidence="2 4 5 6">Coreceptor required for the peroxisomal import of proteins containing a C-terminal PTS2-type peroxisomal targeting signal, such as 3-oxoacyl-CoA thiolase (PubMed:11606420, PubMed:9679140). Acts via its interaction with PEX7, promoting association between PEX7 bound to cargo proteins and the PEX13-PEX14 docking complex (PubMed:11606420, PubMed:9679140). PEX20 along with PEX7 and PTS2-containing cargo proteins are tranlocated into peroxisomes by passing through the PEX13-PEX14 docking complex (PubMed:31042004). PEX20 coreceptor is then retrotranslocated into the cytosol, leading to release of bound cargo in the peroxisome matrix, and reset for a subsequent peroxisome import cycle (By similarity). Also mediates peroxisomal import of proteins that do not contain PTS1- or PTS2-type peroxisomal targeting signals, such as acyl-CoA oxidases (Aox) izozymes (PubMed:31042004). Import of acyl-CoA oxidases (Aox) izozymes is independent of PEX7 (PubMed:31042004).</text>
</comment>
<comment type="subunit">
    <text evidence="4 5">Interacts (via WxxxF/Y and LVxEF motifs) with PEX14; promoting translocation through the PEX13-PEX14 docking complex (PubMed:31042004). Interacts with PEX7 (PubMed:11606420, PubMed:31042004).</text>
</comment>
<comment type="subcellular location">
    <subcellularLocation>
        <location evidence="6">Cytoplasm</location>
        <location evidence="6">Cytosol</location>
    </subcellularLocation>
    <subcellularLocation>
        <location evidence="6">Peroxisome matrix</location>
    </subcellularLocation>
    <text evidence="1 2">Cycles between the cytosol and the peroxisome matrix. Following binding to cargo proteins in the cytosol, recruited to the docking complex, composed of PEX13 and PEX14, leading to translocation into the peroxisome matrix along with cargo proteins. Export and recycling to the cytosol is initiated by binding to the PEX2-PEX10-PEX12 retrotranslocation channel. Cys-4 of PEX20 is then monoubiquitinated by PEX2, promoting its extraction from peroxisomal membrane by the PEX1-PEX6 AAA ATPase complex (By similarity). Extraction is accompanied by release of bound cargo in the peroxisome matrix (By similarity).</text>
</comment>
<comment type="domain">
    <text evidence="5">The WxxxF/Y motifs mediate interaction with PEX14, promoting association with the PEX13-PEX14 docking complex.</text>
</comment>
<comment type="PTM">
    <text evidence="2">Monoubiquitinated at Cys-4 by PEX2 during PEX20 passage through the PEX2-PEX10-PEX12 retrotranslocation channel: monoubiquitination acts as a signal for PEX20 extraction and is required for proper export from peroxisomes and recycling (By similarity). When PEX5 recycling is compromised, polyubiquitinated at Lys-15 by PEX10 during its passage through the retrotranslocation channel, leading to its degradation (By similarity).</text>
</comment>
<comment type="similarity">
    <text evidence="7">Belongs to the peroxisomal targeting signal receptor family.</text>
</comment>
<reference key="1">
    <citation type="journal article" date="1998" name="J. Cell Biol.">
        <title>Pex20p of the yeast Yarrowia lipolytica is required for the oligomerization of thiolase in the cytosol and for its targeting to the peroxisome.</title>
        <authorList>
            <person name="Titorenko V.I."/>
            <person name="Smith J.J."/>
            <person name="Szilard R.K."/>
            <person name="Rachubinski R.A."/>
        </authorList>
    </citation>
    <scope>NUCLEOTIDE SEQUENCE [GENOMIC DNA]</scope>
    <scope>FUNCTION</scope>
    <scope>SUBCELLULAR LOCATION</scope>
    <source>
        <strain>E122</strain>
    </source>
</reference>
<reference key="2">
    <citation type="journal article" date="2004" name="Nature">
        <title>Genome evolution in yeasts.</title>
        <authorList>
            <person name="Dujon B."/>
            <person name="Sherman D."/>
            <person name="Fischer G."/>
            <person name="Durrens P."/>
            <person name="Casaregola S."/>
            <person name="Lafontaine I."/>
            <person name="de Montigny J."/>
            <person name="Marck C."/>
            <person name="Neuveglise C."/>
            <person name="Talla E."/>
            <person name="Goffard N."/>
            <person name="Frangeul L."/>
            <person name="Aigle M."/>
            <person name="Anthouard V."/>
            <person name="Babour A."/>
            <person name="Barbe V."/>
            <person name="Barnay S."/>
            <person name="Blanchin S."/>
            <person name="Beckerich J.-M."/>
            <person name="Beyne E."/>
            <person name="Bleykasten C."/>
            <person name="Boisrame A."/>
            <person name="Boyer J."/>
            <person name="Cattolico L."/>
            <person name="Confanioleri F."/>
            <person name="de Daruvar A."/>
            <person name="Despons L."/>
            <person name="Fabre E."/>
            <person name="Fairhead C."/>
            <person name="Ferry-Dumazet H."/>
            <person name="Groppi A."/>
            <person name="Hantraye F."/>
            <person name="Hennequin C."/>
            <person name="Jauniaux N."/>
            <person name="Joyet P."/>
            <person name="Kachouri R."/>
            <person name="Kerrest A."/>
            <person name="Koszul R."/>
            <person name="Lemaire M."/>
            <person name="Lesur I."/>
            <person name="Ma L."/>
            <person name="Muller H."/>
            <person name="Nicaud J.-M."/>
            <person name="Nikolski M."/>
            <person name="Oztas S."/>
            <person name="Ozier-Kalogeropoulos O."/>
            <person name="Pellenz S."/>
            <person name="Potier S."/>
            <person name="Richard G.-F."/>
            <person name="Straub M.-L."/>
            <person name="Suleau A."/>
            <person name="Swennen D."/>
            <person name="Tekaia F."/>
            <person name="Wesolowski-Louvel M."/>
            <person name="Westhof E."/>
            <person name="Wirth B."/>
            <person name="Zeniou-Meyer M."/>
            <person name="Zivanovic Y."/>
            <person name="Bolotin-Fukuhara M."/>
            <person name="Thierry A."/>
            <person name="Bouchier C."/>
            <person name="Caudron B."/>
            <person name="Scarpelli C."/>
            <person name="Gaillardin C."/>
            <person name="Weissenbach J."/>
            <person name="Wincker P."/>
            <person name="Souciet J.-L."/>
        </authorList>
    </citation>
    <scope>NUCLEOTIDE SEQUENCE [LARGE SCALE GENOMIC DNA]</scope>
    <source>
        <strain>CLIB 122 / E 150</strain>
    </source>
</reference>
<reference key="3">
    <citation type="journal article" date="2019" name="Traffic">
        <title>Pex20p functions as the receptor for non-PTS1/non-PTS2 acyl-CoA oxidase import into peroxisomes of the yeast Yarrowia lipolytica.</title>
        <authorList>
            <person name="Chang J."/>
            <person name="Rachubinski R.A."/>
        </authorList>
    </citation>
    <scope>FUNCTION</scope>
    <scope>INTERACTION WITH PEX7 AND PEX14</scope>
    <scope>DOMAIN</scope>
    <scope>UBIQUITINATION AT CYS-4 AND LYS-15</scope>
    <scope>MUTAGENESIS OF TRP-103; TRP-126; SER-280 AND TRP-411</scope>
</reference>
<reference key="4">
    <citation type="journal article" date="2001" name="EMBO Rep.">
        <title>Yarrowia lipolytica Pex20p, Saccharomyces cerevisiae Pex18p/Pex21p and mammalian Pex5pL fulfil a common function in the early steps of the peroxisomal PTS2 import pathway.</title>
        <authorList>
            <person name="Einwaechter H."/>
            <person name="Sowinski S."/>
            <person name="Kunau W.H."/>
            <person name="Schliebs W."/>
        </authorList>
    </citation>
    <scope>FUNCTION</scope>
    <scope>INTERACTION WITH PEX7</scope>
    <scope>MUTAGENESIS OF SER-280</scope>
</reference>
<sequence>MASCGPSNALQNLSKHASADRSLQHDRMAPGGAPGAQRQQFRSQTQGGQLNNEFQQFAQAGPAHNSFEQSQMGPHFGQQHFGQPHQPQMGQHAPMAHGQQSDWAQSFSQLNLGPQTGPQHTQQSNWGQDFMRQSPQSHQVQPQMANGVMGSMSGMSSFGPMYSNSQLMNSTYGLQTEHQQTHKTETKSSQDAAFEAAFGAVEESITKTSDKGKEVEKDPMEQTYRYDQADALNRQAEHISDNISREEVDIKTDENGEFASIARQIASSLEEADKSKFEKSTFMNLMRRIGNHEVTLDGDKLVNKEGEDIREEVRDELLREGASQENGFQSEAQQTAPLPVHHEAPPPEQIHPHTETGDKQLEDPMVYIEQEAARRAAESGRTVEEEKLNFYSPFEYAQKLGPQGVAKQSNWEEDYDF</sequence>
<name>PEX20_YARLI</name>